<evidence type="ECO:0000250" key="1"/>
<evidence type="ECO:0000250" key="2">
    <source>
        <dbReference type="UniProtKB" id="P97772"/>
    </source>
</evidence>
<evidence type="ECO:0000250" key="3">
    <source>
        <dbReference type="UniProtKB" id="Q13255"/>
    </source>
</evidence>
<evidence type="ECO:0000255" key="4"/>
<evidence type="ECO:0000256" key="5">
    <source>
        <dbReference type="SAM" id="MobiDB-lite"/>
    </source>
</evidence>
<evidence type="ECO:0000269" key="6">
    <source>
    </source>
</evidence>
<evidence type="ECO:0000269" key="7">
    <source>
    </source>
</evidence>
<evidence type="ECO:0000269" key="8">
    <source>
    </source>
</evidence>
<evidence type="ECO:0000269" key="9">
    <source>
    </source>
</evidence>
<evidence type="ECO:0000269" key="10">
    <source>
    </source>
</evidence>
<evidence type="ECO:0000269" key="11">
    <source>
    </source>
</evidence>
<evidence type="ECO:0000269" key="12">
    <source>
    </source>
</evidence>
<evidence type="ECO:0000269" key="13">
    <source>
    </source>
</evidence>
<evidence type="ECO:0000305" key="14"/>
<evidence type="ECO:0007744" key="15">
    <source>
    </source>
</evidence>
<evidence type="ECO:0007829" key="16">
    <source>
        <dbReference type="PDB" id="1EWK"/>
    </source>
</evidence>
<evidence type="ECO:0007829" key="17">
    <source>
        <dbReference type="PDB" id="1ISS"/>
    </source>
</evidence>
<name>GRM1_RAT</name>
<protein>
    <recommendedName>
        <fullName>Metabotropic glutamate receptor 1</fullName>
        <shortName>mGluR1</shortName>
    </recommendedName>
</protein>
<feature type="signal peptide" evidence="4">
    <location>
        <begin position="1"/>
        <end position="18"/>
    </location>
</feature>
<feature type="chain" id="PRO_0000012924" description="Metabotropic glutamate receptor 1">
    <location>
        <begin position="19"/>
        <end position="1199"/>
    </location>
</feature>
<feature type="topological domain" description="Extracellular" evidence="1">
    <location>
        <begin position="19"/>
        <end position="592"/>
    </location>
</feature>
<feature type="transmembrane region" description="Helical; Name=1" evidence="1">
    <location>
        <begin position="593"/>
        <end position="615"/>
    </location>
</feature>
<feature type="topological domain" description="Cytoplasmic" evidence="1">
    <location>
        <begin position="616"/>
        <end position="629"/>
    </location>
</feature>
<feature type="transmembrane region" description="Helical; Name=2" evidence="1">
    <location>
        <begin position="630"/>
        <end position="650"/>
    </location>
</feature>
<feature type="topological domain" description="Extracellular" evidence="1">
    <location>
        <begin position="651"/>
        <end position="658"/>
    </location>
</feature>
<feature type="transmembrane region" description="Helical; Name=3" evidence="1">
    <location>
        <begin position="659"/>
        <end position="680"/>
    </location>
</feature>
<feature type="topological domain" description="Cytoplasmic" evidence="1">
    <location>
        <begin position="681"/>
        <end position="703"/>
    </location>
</feature>
<feature type="transmembrane region" description="Helical; Name=4" evidence="1">
    <location>
        <begin position="704"/>
        <end position="727"/>
    </location>
</feature>
<feature type="topological domain" description="Extracellular" evidence="1">
    <location>
        <begin position="728"/>
        <end position="750"/>
    </location>
</feature>
<feature type="transmembrane region" description="Helical; Name=5" evidence="1">
    <location>
        <begin position="751"/>
        <end position="772"/>
    </location>
</feature>
<feature type="topological domain" description="Cytoplasmic" evidence="1">
    <location>
        <begin position="773"/>
        <end position="785"/>
    </location>
</feature>
<feature type="transmembrane region" description="Helical; Name=6" evidence="1">
    <location>
        <begin position="786"/>
        <end position="807"/>
    </location>
</feature>
<feature type="topological domain" description="Extracellular" evidence="1">
    <location>
        <begin position="808"/>
        <end position="815"/>
    </location>
</feature>
<feature type="transmembrane region" description="Helical; Name=7" evidence="1">
    <location>
        <begin position="816"/>
        <end position="840"/>
    </location>
</feature>
<feature type="topological domain" description="Cytoplasmic" evidence="1">
    <location>
        <begin position="841"/>
        <end position="1199"/>
    </location>
</feature>
<feature type="region of interest" description="Disordered" evidence="5">
    <location>
        <begin position="882"/>
        <end position="905"/>
    </location>
</feature>
<feature type="region of interest" description="Disordered" evidence="5">
    <location>
        <begin position="959"/>
        <end position="1036"/>
    </location>
</feature>
<feature type="region of interest" description="Disordered" evidence="5">
    <location>
        <begin position="1056"/>
        <end position="1081"/>
    </location>
</feature>
<feature type="region of interest" description="Disordered" evidence="5">
    <location>
        <begin position="1120"/>
        <end position="1177"/>
    </location>
</feature>
<feature type="compositionally biased region" description="Polar residues" evidence="5">
    <location>
        <begin position="885"/>
        <end position="895"/>
    </location>
</feature>
<feature type="compositionally biased region" description="Pro residues" evidence="5">
    <location>
        <begin position="1012"/>
        <end position="1033"/>
    </location>
</feature>
<feature type="compositionally biased region" description="Acidic residues" evidence="5">
    <location>
        <begin position="1125"/>
        <end position="1136"/>
    </location>
</feature>
<feature type="compositionally biased region" description="Low complexity" evidence="5">
    <location>
        <begin position="1159"/>
        <end position="1175"/>
    </location>
</feature>
<feature type="binding site" evidence="8 10">
    <location>
        <position position="74"/>
    </location>
    <ligand>
        <name>L-glutamate</name>
        <dbReference type="ChEBI" id="CHEBI:29985"/>
    </ligand>
</feature>
<feature type="binding site" evidence="8 10">
    <location>
        <position position="165"/>
    </location>
    <ligand>
        <name>L-glutamate</name>
        <dbReference type="ChEBI" id="CHEBI:29985"/>
    </ligand>
</feature>
<feature type="binding site">
    <location>
        <begin position="186"/>
        <end position="188"/>
    </location>
    <ligand>
        <name>L-glutamate</name>
        <dbReference type="ChEBI" id="CHEBI:29985"/>
    </ligand>
</feature>
<feature type="binding site" evidence="8 10">
    <location>
        <position position="236"/>
    </location>
    <ligand>
        <name>L-glutamate</name>
        <dbReference type="ChEBI" id="CHEBI:29985"/>
    </ligand>
</feature>
<feature type="binding site" evidence="8 10">
    <location>
        <position position="318"/>
    </location>
    <ligand>
        <name>L-glutamate</name>
        <dbReference type="ChEBI" id="CHEBI:29985"/>
    </ligand>
</feature>
<feature type="binding site" evidence="8 10">
    <location>
        <position position="409"/>
    </location>
    <ligand>
        <name>L-glutamate</name>
        <dbReference type="ChEBI" id="CHEBI:29985"/>
    </ligand>
</feature>
<feature type="modified residue" description="Phosphoserine" evidence="2">
    <location>
        <position position="853"/>
    </location>
</feature>
<feature type="modified residue" description="Phosphothreonine" evidence="2">
    <location>
        <position position="871"/>
    </location>
</feature>
<feature type="modified residue" description="Phosphoserine" evidence="15">
    <location>
        <position position="894"/>
    </location>
</feature>
<feature type="modified residue" description="Phosphoserine" evidence="2">
    <location>
        <position position="969"/>
    </location>
</feature>
<feature type="modified residue" description="Phosphoserine" evidence="2">
    <location>
        <position position="1098"/>
    </location>
</feature>
<feature type="modified residue" description="Phosphoserine" evidence="15">
    <location>
        <position position="1147"/>
    </location>
</feature>
<feature type="modified residue" description="Phosphothreonine" evidence="15">
    <location>
        <position position="1151"/>
    </location>
</feature>
<feature type="modified residue" description="Phosphoserine" evidence="2">
    <location>
        <position position="1154"/>
    </location>
</feature>
<feature type="glycosylation site" description="N-linked (GlcNAc...) asparagine" evidence="8">
    <location>
        <position position="98"/>
    </location>
</feature>
<feature type="glycosylation site" description="N-linked (GlcNAc...) asparagine" evidence="8">
    <location>
        <position position="223"/>
    </location>
</feature>
<feature type="glycosylation site" description="N-linked (GlcNAc...) asparagine" evidence="4">
    <location>
        <position position="397"/>
    </location>
</feature>
<feature type="glycosylation site" description="N-linked (GlcNAc...) asparagine" evidence="4">
    <location>
        <position position="515"/>
    </location>
</feature>
<feature type="disulfide bond">
    <location>
        <begin position="67"/>
        <end position="109"/>
    </location>
</feature>
<feature type="disulfide bond" description="Interchain">
    <location>
        <position position="140"/>
    </location>
</feature>
<feature type="disulfide bond">
    <location>
        <begin position="289"/>
        <end position="291"/>
    </location>
</feature>
<feature type="disulfide bond">
    <location>
        <begin position="378"/>
        <end position="394"/>
    </location>
</feature>
<feature type="disulfide bond">
    <location>
        <begin position="432"/>
        <end position="439"/>
    </location>
</feature>
<feature type="disulfide bond" evidence="1">
    <location>
        <begin position="657"/>
        <end position="746"/>
    </location>
</feature>
<feature type="splice variant" id="VSP_002026" description="In isoform 1B." evidence="14">
    <original>NSNGKSVSWSEPGGRQAPKG</original>
    <variation>KKRQPEFSPSSQCPSAHAQL</variation>
    <location>
        <begin position="887"/>
        <end position="906"/>
    </location>
</feature>
<feature type="splice variant" id="VSP_002028" description="In isoform 1C." evidence="14">
    <original>SNGKSVSWSE</original>
    <variation>FALDRQNTVY</variation>
    <location>
        <begin position="888"/>
        <end position="897"/>
    </location>
</feature>
<feature type="splice variant" id="VSP_002029" description="In isoform 1C." evidence="14">
    <location>
        <begin position="898"/>
        <end position="1199"/>
    </location>
</feature>
<feature type="splice variant" id="VSP_002027" description="In isoform 1B." evidence="14">
    <location>
        <begin position="907"/>
        <end position="1199"/>
    </location>
</feature>
<feature type="mutagenesis site" description="Impairs protein folding and abolishes location at the cell surface." evidence="7">
    <original>C</original>
    <variation>S</variation>
    <location>
        <position position="67"/>
    </location>
</feature>
<feature type="mutagenesis site" description="Impairs protein folding and abolishes location at the cell surface." evidence="7">
    <original>C</original>
    <variation>S</variation>
    <location>
        <position position="109"/>
    </location>
</feature>
<feature type="mutagenesis site" description="Impairs homodimerization." evidence="7">
    <original>C</original>
    <variation>S</variation>
    <location>
        <position position="140"/>
    </location>
</feature>
<feature type="strand" evidence="16">
    <location>
        <begin position="39"/>
        <end position="41"/>
    </location>
</feature>
<feature type="strand" evidence="16">
    <location>
        <begin position="44"/>
        <end position="51"/>
    </location>
</feature>
<feature type="turn" evidence="16">
    <location>
        <begin position="59"/>
        <end position="65"/>
    </location>
</feature>
<feature type="turn" evidence="16">
    <location>
        <begin position="72"/>
        <end position="75"/>
    </location>
</feature>
<feature type="helix" evidence="16">
    <location>
        <begin position="76"/>
        <end position="91"/>
    </location>
</feature>
<feature type="strand" evidence="16">
    <location>
        <begin position="93"/>
        <end position="96"/>
    </location>
</feature>
<feature type="strand" evidence="16">
    <location>
        <begin position="101"/>
        <end position="107"/>
    </location>
</feature>
<feature type="helix" evidence="16">
    <location>
        <begin position="112"/>
        <end position="123"/>
    </location>
</feature>
<feature type="strand" evidence="16">
    <location>
        <begin position="156"/>
        <end position="160"/>
    </location>
</feature>
<feature type="helix" evidence="16">
    <location>
        <begin position="165"/>
        <end position="175"/>
    </location>
</feature>
<feature type="helix" evidence="16">
    <location>
        <begin position="176"/>
        <end position="178"/>
    </location>
</feature>
<feature type="strand" evidence="16">
    <location>
        <begin position="182"/>
        <end position="186"/>
    </location>
</feature>
<feature type="helix" evidence="16">
    <location>
        <begin position="190"/>
        <end position="193"/>
    </location>
</feature>
<feature type="turn" evidence="16">
    <location>
        <begin position="195"/>
        <end position="197"/>
    </location>
</feature>
<feature type="strand" evidence="16">
    <location>
        <begin position="201"/>
        <end position="205"/>
    </location>
</feature>
<feature type="helix" evidence="16">
    <location>
        <begin position="208"/>
        <end position="221"/>
    </location>
</feature>
<feature type="strand" evidence="16">
    <location>
        <begin position="226"/>
        <end position="234"/>
    </location>
</feature>
<feature type="helix" evidence="16">
    <location>
        <begin position="235"/>
        <end position="251"/>
    </location>
</feature>
<feature type="strand" evidence="16">
    <location>
        <begin position="254"/>
        <end position="261"/>
    </location>
</feature>
<feature type="strand" evidence="17">
    <location>
        <begin position="263"/>
        <end position="265"/>
    </location>
</feature>
<feature type="helix" evidence="16">
    <location>
        <begin position="267"/>
        <end position="278"/>
    </location>
</feature>
<feature type="turn" evidence="16">
    <location>
        <begin position="279"/>
        <end position="283"/>
    </location>
</feature>
<feature type="strand" evidence="16">
    <location>
        <begin position="286"/>
        <end position="290"/>
    </location>
</feature>
<feature type="helix" evidence="16">
    <location>
        <begin position="293"/>
        <end position="306"/>
    </location>
</feature>
<feature type="strand" evidence="16">
    <location>
        <begin position="313"/>
        <end position="316"/>
    </location>
</feature>
<feature type="turn" evidence="16">
    <location>
        <begin position="318"/>
        <end position="322"/>
    </location>
</feature>
<feature type="helix" evidence="16">
    <location>
        <begin position="324"/>
        <end position="327"/>
    </location>
</feature>
<feature type="helix" evidence="16">
    <location>
        <begin position="331"/>
        <end position="334"/>
    </location>
</feature>
<feature type="strand" evidence="16">
    <location>
        <begin position="338"/>
        <end position="342"/>
    </location>
</feature>
<feature type="helix" evidence="16">
    <location>
        <begin position="348"/>
        <end position="354"/>
    </location>
</feature>
<feature type="turn" evidence="16">
    <location>
        <begin position="359"/>
        <end position="361"/>
    </location>
</feature>
<feature type="helix" evidence="16">
    <location>
        <begin position="368"/>
        <end position="375"/>
    </location>
</feature>
<feature type="turn" evidence="16">
    <location>
        <begin position="400"/>
        <end position="403"/>
    </location>
</feature>
<feature type="helix" evidence="16">
    <location>
        <begin position="410"/>
        <end position="431"/>
    </location>
</feature>
<feature type="helix" evidence="16">
    <location>
        <begin position="440"/>
        <end position="442"/>
    </location>
</feature>
<feature type="helix" evidence="16">
    <location>
        <begin position="447"/>
        <end position="455"/>
    </location>
</feature>
<feature type="strand" evidence="16">
    <location>
        <begin position="458"/>
        <end position="460"/>
    </location>
</feature>
<feature type="strand" evidence="16">
    <location>
        <begin position="466"/>
        <end position="468"/>
    </location>
</feature>
<feature type="strand" evidence="16">
    <location>
        <begin position="479"/>
        <end position="486"/>
    </location>
</feature>
<feature type="strand" evidence="16">
    <location>
        <begin position="488"/>
        <end position="490"/>
    </location>
</feature>
<feature type="strand" evidence="16">
    <location>
        <begin position="492"/>
        <end position="501"/>
    </location>
</feature>
<feature type="strand" evidence="16">
    <location>
        <begin position="504"/>
        <end position="507"/>
    </location>
</feature>
<feature type="turn" evidence="16">
    <location>
        <begin position="509"/>
        <end position="511"/>
    </location>
</feature>
<reference key="1">
    <citation type="journal article" date="1991" name="Nature">
        <title>Sequence and expression of a metabotropic glutamate receptor.</title>
        <authorList>
            <person name="Masu M."/>
            <person name="Tanabe Y."/>
            <person name="Tsuchida K."/>
            <person name="Shigemoto R."/>
            <person name="Nakanishi S."/>
        </authorList>
    </citation>
    <scope>NUCLEOTIDE SEQUENCE [MRNA]</scope>
    <scope>FUNCTION</scope>
    <scope>TISSUE SPECIFICITY</scope>
    <source>
        <strain>Sprague-Dawley</strain>
        <tissue>Brain</tissue>
    </source>
</reference>
<reference key="2">
    <citation type="journal article" date="1991" name="Science">
        <title>Cloning, expression, and gene structure of a G protein-coupled glutamate receptor from rat brain.</title>
        <authorList>
            <person name="Houamed K.M."/>
            <person name="Kuijper J.L."/>
            <person name="Gilbert T.L."/>
            <person name="Haldeman B.A."/>
            <person name="O'Hara P.J."/>
            <person name="Mulvihill E.R."/>
            <person name="Almers W."/>
            <person name="Hagen F.S."/>
        </authorList>
    </citation>
    <scope>NUCLEOTIDE SEQUENCE [MRNA]</scope>
    <scope>FUNCTION</scope>
    <scope>TISSUE SPECIFICITY</scope>
    <source>
        <tissue>Brain</tissue>
    </source>
</reference>
<reference key="3">
    <citation type="journal article" date="1992" name="Neuron">
        <title>A family of metabotropic glutamate receptors.</title>
        <authorList>
            <person name="Tanabe Y."/>
            <person name="Masu M."/>
            <person name="Ishii T."/>
            <person name="Shigemoto R."/>
            <person name="Nakanishi S."/>
        </authorList>
    </citation>
    <scope>ALTERNATIVE SPLICING (ISOFORM 1B)</scope>
    <source>
        <tissue>Brain</tissue>
    </source>
</reference>
<reference key="4">
    <citation type="journal article" date="1992" name="Proc. Natl. Acad. Sci. U.S.A.">
        <title>Alternative splicing generates metabotropic glutamate receptors inducing different patterns of calcium release in Xenopus oocytes.</title>
        <authorList>
            <person name="Pin J.-P."/>
            <person name="Waeber C."/>
            <person name="Prezeau L."/>
            <person name="Bockaert J."/>
            <person name="Heinemann S.F."/>
        </authorList>
    </citation>
    <scope>ALTERNATIVE SPLICING (ISOFORM 1C)</scope>
    <scope>FUNCTION</scope>
    <source>
        <tissue>Brain</tissue>
    </source>
</reference>
<reference key="5">
    <citation type="journal article" date="1999" name="Genes Cells">
        <title>Competitive interaction of seven in absentia homolog-1A and Ca2+/calmodulin with the cytoplasmic tail of group 1 metabotropic glutamate receptors.</title>
        <authorList>
            <person name="Ishikawa K."/>
            <person name="Nash S.R."/>
            <person name="Nishimune A."/>
            <person name="Neki A."/>
            <person name="Kaneko S."/>
            <person name="Nakanishi S."/>
        </authorList>
    </citation>
    <scope>INTERACTION WITH SIAH1</scope>
</reference>
<reference key="6">
    <citation type="journal article" date="2000" name="J. Biol. Chem.">
        <title>Cys-140 is critical for metabotropic glutamate receptor-1 dimerization.</title>
        <authorList>
            <person name="Ray K."/>
            <person name="Hauschild B.C."/>
        </authorList>
    </citation>
    <scope>FUNCTION</scope>
    <scope>INTERCHAIN DISULFIDE BOND</scope>
    <scope>SUBCELLULAR LOCATION</scope>
    <scope>MUTAGENESIS OF CYS-67; CYS-109 AND CYS-140</scope>
</reference>
<reference key="7">
    <citation type="journal article" date="2002" name="J. Neurosci.">
        <title>Tamalin, a PDZ domain-containing protein, links a protein complex formation of group 1 metabotropic glutamate receptors and the guanine nucleotide exchange factor cytohesins.</title>
        <authorList>
            <person name="Kitano J."/>
            <person name="Kimura K."/>
            <person name="Yamazaki Y."/>
            <person name="Soda T."/>
            <person name="Shigemoto R."/>
            <person name="Nakajima Y."/>
            <person name="Nakanishi S."/>
        </authorList>
    </citation>
    <scope>INTERACTION WITH TAMALIN</scope>
</reference>
<reference key="8">
    <citation type="journal article" date="2012" name="Nat. Commun.">
        <title>Quantitative maps of protein phosphorylation sites across 14 different rat organs and tissues.</title>
        <authorList>
            <person name="Lundby A."/>
            <person name="Secher A."/>
            <person name="Lage K."/>
            <person name="Nordsborg N.B."/>
            <person name="Dmytriyev A."/>
            <person name="Lundby C."/>
            <person name="Olsen J.V."/>
        </authorList>
    </citation>
    <scope>PHOSPHORYLATION [LARGE SCALE ANALYSIS] AT SER-894; SER-1147 AND THR-1151</scope>
    <scope>IDENTIFICATION BY MASS SPECTROMETRY [LARGE SCALE ANALYSIS]</scope>
</reference>
<reference key="9">
    <citation type="journal article" date="2000" name="Nature">
        <title>Structural basis of glutamate recognition by a dimeric metabotropic glutamate receptor.</title>
        <authorList>
            <person name="Kunishima N."/>
            <person name="Shimada Y."/>
            <person name="Tsuji Y."/>
            <person name="Sato T."/>
            <person name="Yamamoto M."/>
            <person name="Kumasaka T."/>
            <person name="Nakanishi S."/>
            <person name="Jingami H."/>
            <person name="Morikawa K."/>
        </authorList>
    </citation>
    <scope>X-RAY CRYSTALLOGRAPHY (2.2 ANGSTROMS) OF 33-522 ALONE AND IN COMPLEX WITH GLUTAMATE</scope>
    <scope>SUBUNIT</scope>
    <scope>GLYCOSYLATION AT ASN-98 AND ASN-223</scope>
    <scope>GLUTAMATE-BINDING SITES</scope>
    <scope>DISULFIDE BONDS</scope>
</reference>
<reference key="10">
    <citation type="journal article" date="2002" name="Proc. Natl. Acad. Sci. U.S.A.">
        <title>Structural views of the ligand-binding cores of a metabotropic glutamate receptor complexed with an antagonist and both glutamate and Gd3+.</title>
        <authorList>
            <person name="Tsuchiya D."/>
            <person name="Kunishima N."/>
            <person name="Kamiya N."/>
            <person name="Jingami H."/>
            <person name="Morikawa K."/>
        </authorList>
    </citation>
    <scope>X-RAY CRYSTALLOGRAPHY (3.3 ANGSTROMS) OF 33-522 IN COMPLEX WITH GLUTAMATE AND ANTAGONIST</scope>
    <scope>SUBUNIT</scope>
    <scope>DISULFIDE BONDS</scope>
</reference>
<sequence length="1199" mass="133236">MVRLLLIFFPMIFLEMSILPRMPDRKVLLAGASSQRSVARMDGDVIIGALFSVHHQPPAEKVPERKCGEIREQYGIQRVEAMFHTLDKINADPVLLPNITLGSEIRDSCWHSSVALEQSIEFIRDSLISIRDEKDGLNRCLPDGQTLPPGRTKKPIAGVIGPGSSSVAIQVQNLLQLFDIPQIAYSATSIDLSDKTLYKYFLRVVPSDTLQARAMLDIVKRYNWTYVSAVHTEGNYGESGMDAFKELAAQEGLCIAHSDKIYSNAGEKSFDRLLRKLRERLPKARVVVCFCEGMTVRGLLSAMRRLGVVGEFSLIGSDGWADRDEVIEGYEVEANGGITIKLQSPEVRSFDDYFLKLRLDTNTRNPWFPEFWQHRFQCRLPGHLLENPNFKKVCTGNESLEENYVQDSKMGFVINAIYAMAHGLQNMHHALCPGHVGLCDAMKPIDGRKLLDFLIKSSFVGVSGEEVWFDEKGDAPGRYDIMNLQYTEANRYDYVHVGTWHEGVLNIDDYKIQMNKSGMVRSVCSEPCLKGQIKVIRKGEVSCCWICTACKENEFVQDEFTCRACDLGWWPNAELTGCEPIPVRYLEWSDIESIIAIAFSCLGILVTLFVTLIFVLYRDTPVVKSSSRELCYIILAGIFLGYVCPFTLIAKPTTTSCYLQRLLVGLSSAMCYSALVTKTNRIARILAGSKKKICTRKPRFMSAWAQVIIASILISVQLTLVVTLIIMEPPMPILSYPSIKEVYLICNTSNLGVVAPVGYNGLLIMSCTYYAFKTRNVPANFNEAKYIAFTMYTTCIIWLAFVPIYFGSNYKIITTCFAVSLSVTVALGCMFTPKMYIIIAKPERNVRSAFTTSDVVRMHVGDGKLPCRSNTFLNIFRRKKPGAGNANSNGKSVSWSEPGGRQAPKGQHVWQRLSVHVKTNETACNQTAVIKPLTKSYQGSGKSLTFSDASTKTLYNVEEEDNTPSAHFSPPSSPSMVVHRRGPPVATTPPLPPHLTAEETPLFLADSVIPKGLPPPLPQQQPQQPPPQQPPQQPKSLMDQLQGVVTNFGSGIPDFHAVLAGPGTPGNSLRSLYPPPPPPQHLQMLPLHLSTFQEESISPPGEDIDDDSERFKLLQEFVYEREGNTEEDELEEEEDLPTASKLTPEDSPALTPPSPFRDSVASGSSVPSSPVSESVLCTPPNVTYASVILRDYKQSSSTL</sequence>
<dbReference type="EMBL" id="X57569">
    <property type="protein sequence ID" value="CAA40799.1"/>
    <property type="molecule type" value="mRNA"/>
</dbReference>
<dbReference type="EMBL" id="M61099">
    <property type="protein sequence ID" value="AAA19497.1"/>
    <property type="molecule type" value="mRNA"/>
</dbReference>
<dbReference type="EMBL" id="S48085">
    <property type="protein sequence ID" value="AAB24138.1"/>
    <property type="molecule type" value="mRNA"/>
</dbReference>
<dbReference type="PIR" id="A41939">
    <property type="entry name" value="A41939"/>
</dbReference>
<dbReference type="RefSeq" id="NP_001107802.1">
    <molecule id="P23385-2"/>
    <property type="nucleotide sequence ID" value="NM_001114330.2"/>
</dbReference>
<dbReference type="RefSeq" id="NP_058707.1">
    <property type="nucleotide sequence ID" value="NM_017011.1"/>
</dbReference>
<dbReference type="RefSeq" id="XP_063136782.1">
    <molecule id="P23385-2"/>
    <property type="nucleotide sequence ID" value="XM_063280712.1"/>
</dbReference>
<dbReference type="PDB" id="1EWK">
    <property type="method" value="X-ray"/>
    <property type="resolution" value="2.20 A"/>
    <property type="chains" value="A/B=33-522"/>
</dbReference>
<dbReference type="PDB" id="1EWT">
    <property type="method" value="X-ray"/>
    <property type="resolution" value="3.70 A"/>
    <property type="chains" value="A/B=33-522"/>
</dbReference>
<dbReference type="PDB" id="1EWV">
    <property type="method" value="X-ray"/>
    <property type="resolution" value="4.00 A"/>
    <property type="chains" value="A/B=33-522"/>
</dbReference>
<dbReference type="PDB" id="1ISR">
    <property type="method" value="X-ray"/>
    <property type="resolution" value="4.00 A"/>
    <property type="chains" value="A=33-522"/>
</dbReference>
<dbReference type="PDB" id="1ISS">
    <property type="method" value="X-ray"/>
    <property type="resolution" value="3.30 A"/>
    <property type="chains" value="A/B=33-522"/>
</dbReference>
<dbReference type="PDBsum" id="1EWK"/>
<dbReference type="PDBsum" id="1EWT"/>
<dbReference type="PDBsum" id="1EWV"/>
<dbReference type="PDBsum" id="1ISR"/>
<dbReference type="PDBsum" id="1ISS"/>
<dbReference type="SMR" id="P23385"/>
<dbReference type="BioGRID" id="246579">
    <property type="interactions" value="13"/>
</dbReference>
<dbReference type="CORUM" id="P23385"/>
<dbReference type="DIP" id="DIP-44897N"/>
<dbReference type="ELM" id="P23385"/>
<dbReference type="FunCoup" id="P23385">
    <property type="interactions" value="1212"/>
</dbReference>
<dbReference type="IntAct" id="P23385">
    <property type="interactions" value="5"/>
</dbReference>
<dbReference type="MINT" id="P23385"/>
<dbReference type="STRING" id="10116.ENSRNOP00000019319"/>
<dbReference type="BindingDB" id="P23385"/>
<dbReference type="ChEMBL" id="CHEMBL4477"/>
<dbReference type="DrugCentral" id="P23385"/>
<dbReference type="GuidetoPHARMACOLOGY" id="289"/>
<dbReference type="GlyCosmos" id="P23385">
    <property type="glycosylation" value="4 sites, No reported glycans"/>
</dbReference>
<dbReference type="GlyGen" id="P23385">
    <property type="glycosylation" value="5 sites"/>
</dbReference>
<dbReference type="iPTMnet" id="P23385"/>
<dbReference type="PhosphoSitePlus" id="P23385"/>
<dbReference type="PaxDb" id="10116-ENSRNOP00000019319"/>
<dbReference type="Ensembl" id="ENSRNOT00000044325.4">
    <molecule id="P23385-2"/>
    <property type="protein sequence ID" value="ENSRNOP00000047790.3"/>
    <property type="gene ID" value="ENSRNOG00000014290.8"/>
</dbReference>
<dbReference type="GeneID" id="24414"/>
<dbReference type="KEGG" id="rno:24414"/>
<dbReference type="UCSC" id="RGD:2742">
    <molecule id="P23385-1"/>
    <property type="organism name" value="rat"/>
</dbReference>
<dbReference type="AGR" id="RGD:2742"/>
<dbReference type="CTD" id="2911"/>
<dbReference type="RGD" id="2742">
    <property type="gene designation" value="Grm1"/>
</dbReference>
<dbReference type="VEuPathDB" id="HostDB:ENSRNOG00000014290"/>
<dbReference type="eggNOG" id="KOG1056">
    <property type="taxonomic scope" value="Eukaryota"/>
</dbReference>
<dbReference type="GeneTree" id="ENSGT01030000234595"/>
<dbReference type="InParanoid" id="P23385"/>
<dbReference type="OrthoDB" id="425344at2759"/>
<dbReference type="PhylomeDB" id="P23385"/>
<dbReference type="Reactome" id="R-RNO-416476">
    <property type="pathway name" value="G alpha (q) signalling events"/>
</dbReference>
<dbReference type="Reactome" id="R-RNO-420499">
    <property type="pathway name" value="Class C/3 (Metabotropic glutamate/pheromone receptors)"/>
</dbReference>
<dbReference type="Reactome" id="R-RNO-6794361">
    <property type="pathway name" value="Neurexins and neuroligins"/>
</dbReference>
<dbReference type="EvolutionaryTrace" id="P23385"/>
<dbReference type="PRO" id="PR:P23385"/>
<dbReference type="Proteomes" id="UP000002494">
    <property type="component" value="Chromosome 1"/>
</dbReference>
<dbReference type="Bgee" id="ENSRNOG00000014290">
    <property type="expression patterns" value="Expressed in Ammon's horn and 3 other cell types or tissues"/>
</dbReference>
<dbReference type="ExpressionAtlas" id="P23385">
    <property type="expression patterns" value="baseline and differential"/>
</dbReference>
<dbReference type="GO" id="GO:0030424">
    <property type="term" value="C:axon"/>
    <property type="evidence" value="ECO:0000314"/>
    <property type="project" value="UniProtKB"/>
</dbReference>
<dbReference type="GO" id="GO:0044293">
    <property type="term" value="C:dendriole"/>
    <property type="evidence" value="ECO:0000250"/>
    <property type="project" value="UniProtKB"/>
</dbReference>
<dbReference type="GO" id="GO:0030425">
    <property type="term" value="C:dendrite"/>
    <property type="evidence" value="ECO:0000266"/>
    <property type="project" value="RGD"/>
</dbReference>
<dbReference type="GO" id="GO:0043197">
    <property type="term" value="C:dendritic spine"/>
    <property type="evidence" value="ECO:0000314"/>
    <property type="project" value="RGD"/>
</dbReference>
<dbReference type="GO" id="GO:0038037">
    <property type="term" value="C:G protein-coupled receptor dimeric complex"/>
    <property type="evidence" value="ECO:0000266"/>
    <property type="project" value="RGD"/>
</dbReference>
<dbReference type="GO" id="GO:0038038">
    <property type="term" value="C:G protein-coupled receptor homodimeric complex"/>
    <property type="evidence" value="ECO:0000266"/>
    <property type="project" value="RGD"/>
</dbReference>
<dbReference type="GO" id="GO:0098978">
    <property type="term" value="C:glutamatergic synapse"/>
    <property type="evidence" value="ECO:0000314"/>
    <property type="project" value="SynGO"/>
</dbReference>
<dbReference type="GO" id="GO:0043005">
    <property type="term" value="C:neuron projection"/>
    <property type="evidence" value="ECO:0000314"/>
    <property type="project" value="RGD"/>
</dbReference>
<dbReference type="GO" id="GO:0043025">
    <property type="term" value="C:neuronal cell body"/>
    <property type="evidence" value="ECO:0000314"/>
    <property type="project" value="RGD"/>
</dbReference>
<dbReference type="GO" id="GO:0005634">
    <property type="term" value="C:nucleus"/>
    <property type="evidence" value="ECO:0000266"/>
    <property type="project" value="RGD"/>
</dbReference>
<dbReference type="GO" id="GO:0005886">
    <property type="term" value="C:plasma membrane"/>
    <property type="evidence" value="ECO:0000250"/>
    <property type="project" value="UniProtKB"/>
</dbReference>
<dbReference type="GO" id="GO:0014069">
    <property type="term" value="C:postsynaptic density"/>
    <property type="evidence" value="ECO:0000266"/>
    <property type="project" value="RGD"/>
</dbReference>
<dbReference type="GO" id="GO:0098839">
    <property type="term" value="C:postsynaptic density membrane"/>
    <property type="evidence" value="ECO:0000314"/>
    <property type="project" value="SynGO"/>
</dbReference>
<dbReference type="GO" id="GO:0045211">
    <property type="term" value="C:postsynaptic membrane"/>
    <property type="evidence" value="ECO:0000314"/>
    <property type="project" value="SynGO"/>
</dbReference>
<dbReference type="GO" id="GO:0042734">
    <property type="term" value="C:presynaptic membrane"/>
    <property type="evidence" value="ECO:0000314"/>
    <property type="project" value="UniProtKB"/>
</dbReference>
<dbReference type="GO" id="GO:0098685">
    <property type="term" value="C:Schaffer collateral - CA1 synapse"/>
    <property type="evidence" value="ECO:0000266"/>
    <property type="project" value="RGD"/>
</dbReference>
<dbReference type="GO" id="GO:0001640">
    <property type="term" value="F:adenylate cyclase inhibiting G protein-coupled glutamate receptor activity"/>
    <property type="evidence" value="ECO:0000318"/>
    <property type="project" value="GO_Central"/>
</dbReference>
<dbReference type="GO" id="GO:0098872">
    <property type="term" value="F:G protein-coupled neurotransmitter receptor activity involved in regulation of postsynaptic cytosolic calcium ion concentration"/>
    <property type="evidence" value="ECO:0000266"/>
    <property type="project" value="RGD"/>
</dbReference>
<dbReference type="GO" id="GO:0004930">
    <property type="term" value="F:G protein-coupled receptor activity"/>
    <property type="evidence" value="ECO:0000304"/>
    <property type="project" value="RGD"/>
</dbReference>
<dbReference type="GO" id="GO:0099530">
    <property type="term" value="F:G protein-coupled receptor activity involved in regulation of postsynaptic membrane potential"/>
    <property type="evidence" value="ECO:0000266"/>
    <property type="project" value="RGD"/>
</dbReference>
<dbReference type="GO" id="GO:0008066">
    <property type="term" value="F:glutamate receptor activity"/>
    <property type="evidence" value="ECO:0000250"/>
    <property type="project" value="UniProtKB"/>
</dbReference>
<dbReference type="GO" id="GO:0099583">
    <property type="term" value="F:neurotransmitter receptor activity involved in regulation of postsynaptic cytosolic calcium ion concentration"/>
    <property type="evidence" value="ECO:0000318"/>
    <property type="project" value="GO_Central"/>
</dbReference>
<dbReference type="GO" id="GO:0030331">
    <property type="term" value="F:nuclear estrogen receptor binding"/>
    <property type="evidence" value="ECO:0000353"/>
    <property type="project" value="RGD"/>
</dbReference>
<dbReference type="GO" id="GO:0001639">
    <property type="term" value="F:PLC activating G protein-coupled glutamate receptor activity"/>
    <property type="evidence" value="ECO:0000304"/>
    <property type="project" value="UniProtKB"/>
</dbReference>
<dbReference type="GO" id="GO:0019722">
    <property type="term" value="P:calcium-mediated signaling"/>
    <property type="evidence" value="ECO:0000314"/>
    <property type="project" value="RGD"/>
</dbReference>
<dbReference type="GO" id="GO:0071257">
    <property type="term" value="P:cellular response to electrical stimulus"/>
    <property type="evidence" value="ECO:0000266"/>
    <property type="project" value="RGD"/>
</dbReference>
<dbReference type="GO" id="GO:0007268">
    <property type="term" value="P:chemical synaptic transmission"/>
    <property type="evidence" value="ECO:0000270"/>
    <property type="project" value="RGD"/>
</dbReference>
<dbReference type="GO" id="GO:0007216">
    <property type="term" value="P:G protein-coupled glutamate receptor signaling pathway"/>
    <property type="evidence" value="ECO:0000318"/>
    <property type="project" value="GO_Central"/>
</dbReference>
<dbReference type="GO" id="GO:0007186">
    <property type="term" value="P:G protein-coupled receptor signaling pathway"/>
    <property type="evidence" value="ECO:0000266"/>
    <property type="project" value="RGD"/>
</dbReference>
<dbReference type="GO" id="GO:0098712">
    <property type="term" value="P:L-glutamate import across plasma membrane"/>
    <property type="evidence" value="ECO:0000266"/>
    <property type="project" value="RGD"/>
</dbReference>
<dbReference type="GO" id="GO:0007626">
    <property type="term" value="P:locomotory behavior"/>
    <property type="evidence" value="ECO:0000266"/>
    <property type="project" value="RGD"/>
</dbReference>
<dbReference type="GO" id="GO:0051899">
    <property type="term" value="P:membrane depolarization"/>
    <property type="evidence" value="ECO:0000304"/>
    <property type="project" value="UniProtKB"/>
</dbReference>
<dbReference type="GO" id="GO:0007206">
    <property type="term" value="P:phospholipase C-activating G protein-coupled glutamate receptor signaling pathway"/>
    <property type="evidence" value="ECO:0000250"/>
    <property type="project" value="UniProtKB"/>
</dbReference>
<dbReference type="GO" id="GO:0007200">
    <property type="term" value="P:phospholipase C-activating G protein-coupled receptor signaling pathway"/>
    <property type="evidence" value="ECO:0000266"/>
    <property type="project" value="RGD"/>
</dbReference>
<dbReference type="GO" id="GO:0043410">
    <property type="term" value="P:positive regulation of MAPK cascade"/>
    <property type="evidence" value="ECO:0000266"/>
    <property type="project" value="RGD"/>
</dbReference>
<dbReference type="GO" id="GO:0014048">
    <property type="term" value="P:regulation of glutamate secretion"/>
    <property type="evidence" value="ECO:0000304"/>
    <property type="project" value="UniProtKB"/>
</dbReference>
<dbReference type="GO" id="GO:0051930">
    <property type="term" value="P:regulation of sensory perception of pain"/>
    <property type="evidence" value="ECO:0000266"/>
    <property type="project" value="RGD"/>
</dbReference>
<dbReference type="GO" id="GO:0051966">
    <property type="term" value="P:regulation of synaptic transmission, glutamatergic"/>
    <property type="evidence" value="ECO:0000314"/>
    <property type="project" value="UniProtKB"/>
</dbReference>
<dbReference type="GO" id="GO:0019233">
    <property type="term" value="P:sensory perception of pain"/>
    <property type="evidence" value="ECO:0000266"/>
    <property type="project" value="RGD"/>
</dbReference>
<dbReference type="GO" id="GO:0099538">
    <property type="term" value="P:synaptic signaling via neuropeptide"/>
    <property type="evidence" value="ECO:0000266"/>
    <property type="project" value="RGD"/>
</dbReference>
<dbReference type="GO" id="GO:0051932">
    <property type="term" value="P:synaptic transmission, GABAergic"/>
    <property type="evidence" value="ECO:0000304"/>
    <property type="project" value="UniProtKB"/>
</dbReference>
<dbReference type="CDD" id="cd15449">
    <property type="entry name" value="7tmC_mGluR1"/>
    <property type="match status" value="1"/>
</dbReference>
<dbReference type="CDD" id="cd06374">
    <property type="entry name" value="PBP1_mGluR_groupI"/>
    <property type="match status" value="1"/>
</dbReference>
<dbReference type="FunFam" id="3.40.50.2300:FF:000219">
    <property type="entry name" value="Glutamate metabotropic receptor 5"/>
    <property type="match status" value="2"/>
</dbReference>
<dbReference type="FunFam" id="3.40.50.2300:FF:000337">
    <property type="entry name" value="Metabotropic glutamate receptor 1"/>
    <property type="match status" value="1"/>
</dbReference>
<dbReference type="FunFam" id="2.10.50.30:FF:000001">
    <property type="entry name" value="metabotropic glutamate receptor 1"/>
    <property type="match status" value="1"/>
</dbReference>
<dbReference type="Gene3D" id="3.40.50.2300">
    <property type="match status" value="2"/>
</dbReference>
<dbReference type="Gene3D" id="2.10.50.30">
    <property type="entry name" value="GPCR, family 3, nine cysteines domain"/>
    <property type="match status" value="1"/>
</dbReference>
<dbReference type="InterPro" id="IPR001828">
    <property type="entry name" value="ANF_lig-bd_rcpt"/>
</dbReference>
<dbReference type="InterPro" id="IPR000337">
    <property type="entry name" value="GPCR_3"/>
</dbReference>
<dbReference type="InterPro" id="IPR011500">
    <property type="entry name" value="GPCR_3_9-Cys_dom"/>
</dbReference>
<dbReference type="InterPro" id="IPR038550">
    <property type="entry name" value="GPCR_3_9-Cys_sf"/>
</dbReference>
<dbReference type="InterPro" id="IPR017978">
    <property type="entry name" value="GPCR_3_C"/>
</dbReference>
<dbReference type="InterPro" id="IPR017979">
    <property type="entry name" value="GPCR_3_CS"/>
</dbReference>
<dbReference type="InterPro" id="IPR001256">
    <property type="entry name" value="GPCR_3_mGluR1"/>
</dbReference>
<dbReference type="InterPro" id="IPR000162">
    <property type="entry name" value="GPCR_3_mtglu_rcpt"/>
</dbReference>
<dbReference type="InterPro" id="IPR019588">
    <property type="entry name" value="Metabotropic_Glu_rcpt_Homer-bd"/>
</dbReference>
<dbReference type="InterPro" id="IPR050726">
    <property type="entry name" value="mGluR"/>
</dbReference>
<dbReference type="InterPro" id="IPR028082">
    <property type="entry name" value="Peripla_BP_I"/>
</dbReference>
<dbReference type="PANTHER" id="PTHR24060">
    <property type="entry name" value="METABOTROPIC GLUTAMATE RECEPTOR"/>
    <property type="match status" value="1"/>
</dbReference>
<dbReference type="Pfam" id="PF00003">
    <property type="entry name" value="7tm_3"/>
    <property type="match status" value="1"/>
</dbReference>
<dbReference type="Pfam" id="PF01094">
    <property type="entry name" value="ANF_receptor"/>
    <property type="match status" value="1"/>
</dbReference>
<dbReference type="Pfam" id="PF10606">
    <property type="entry name" value="GluR_Homer-bdg"/>
    <property type="match status" value="1"/>
</dbReference>
<dbReference type="Pfam" id="PF07562">
    <property type="entry name" value="NCD3G"/>
    <property type="match status" value="1"/>
</dbReference>
<dbReference type="PRINTS" id="PR00248">
    <property type="entry name" value="GPCRMGR"/>
</dbReference>
<dbReference type="PRINTS" id="PR01051">
    <property type="entry name" value="MTABOTROPC1R"/>
</dbReference>
<dbReference type="PRINTS" id="PR00593">
    <property type="entry name" value="MTABOTROPICR"/>
</dbReference>
<dbReference type="SMART" id="SM01229">
    <property type="entry name" value="GluR_Homer-bdg"/>
    <property type="match status" value="1"/>
</dbReference>
<dbReference type="SUPFAM" id="SSF53822">
    <property type="entry name" value="Periplasmic binding protein-like I"/>
    <property type="match status" value="1"/>
</dbReference>
<dbReference type="PROSITE" id="PS00979">
    <property type="entry name" value="G_PROTEIN_RECEP_F3_1"/>
    <property type="match status" value="1"/>
</dbReference>
<dbReference type="PROSITE" id="PS00980">
    <property type="entry name" value="G_PROTEIN_RECEP_F3_2"/>
    <property type="match status" value="1"/>
</dbReference>
<dbReference type="PROSITE" id="PS00981">
    <property type="entry name" value="G_PROTEIN_RECEP_F3_3"/>
    <property type="match status" value="1"/>
</dbReference>
<dbReference type="PROSITE" id="PS50259">
    <property type="entry name" value="G_PROTEIN_RECEP_F3_4"/>
    <property type="match status" value="1"/>
</dbReference>
<comment type="function">
    <text evidence="2 3 7 11 12 13">G-protein coupled receptor for glutamate. Ligand binding causes a conformation change that triggers signaling via guanine nucleotide-binding proteins (G proteins) and modulates the activity of down-stream effectors. Signaling activates a phosphatidylinositol-calcium second messenger system. May participate in the central action of glutamate in the CNS, such as long-term potentiation in the hippocampus and long-term depression in the cerebellum (PubMed:10945991, PubMed:1438218, PubMed:1656524, PubMed:1847995). May function in the light response in the retina (By similarity). Induces GRID1 and GRID2 cation-channel activation via GNAQ-PLC-PKC pathway in dopaminergic neurons and cerebellar Purkinje cell, respectively (By similarity).</text>
</comment>
<comment type="subunit">
    <text evidence="6 8 9 10">Homodimer; disulfide-linked (PubMed:11069170, PubMed:11867751). The PPXXF motif binds HOMER1, HOMER2 and HOMER3. Interacts with TAMALIN (PubMed:11850456). Interacts with RYR1, RYR2, ITPR1, SHANK1 and SHANK3. Interacts with SIAH1 (PubMed:10469171).</text>
</comment>
<comment type="interaction">
    <interactant intactId="EBI-4410410">
        <id>P23385</id>
    </interactant>
    <interactant intactId="EBI-80049">
        <id>P63088</id>
        <label>Ppp1cc</label>
    </interactant>
    <organismsDiffer>false</organismsDiffer>
    <experiments>15</experiments>
</comment>
<comment type="subcellular location">
    <subcellularLocation>
        <location evidence="3">Cell membrane</location>
        <topology evidence="3">Multi-pass membrane protein</topology>
    </subcellularLocation>
    <subcellularLocation>
        <location evidence="2">Postsynaptic cell membrane</location>
        <topology evidence="4">Multi-pass membrane protein</topology>
    </subcellularLocation>
    <subcellularLocation>
        <location evidence="2">Cell projection</location>
        <location evidence="2">Dendrite</location>
    </subcellularLocation>
    <text evidence="2">Located in dendrioles, small dendrites that makes up a brush structure found as the terminal specialization of a dendrite of a unipolar brush cell.</text>
</comment>
<comment type="alternative products">
    <event type="alternative splicing"/>
    <isoform>
        <id>P23385-1</id>
        <name>1A</name>
        <sequence type="displayed"/>
    </isoform>
    <isoform>
        <id>P23385-2</id>
        <name>1B</name>
        <sequence type="described" ref="VSP_002026 VSP_002027"/>
    </isoform>
    <isoform>
        <id>P23385-3</id>
        <name>1C</name>
        <sequence type="described" ref="VSP_002028 VSP_002029"/>
    </isoform>
</comment>
<comment type="tissue specificity">
    <text evidence="12 13">Predominantly expressed in cerebellar Purkinje cells, CA2-CA3 pyramidal cells of the hippocampus, and mitral and tufted cells of the olfactory bulb.</text>
</comment>
<comment type="miscellaneous">
    <text>Activated by quisqualate &gt; glutamate &gt; ibotenate &gt; trans-1- aminocyclopentyl-1,3-dicarboxylate; inhibited by 2-amino-3-phosphonopropionate.</text>
</comment>
<comment type="miscellaneous">
    <molecule>Isoform 1B</molecule>
    <text evidence="14">C-terminally truncated forms of isoform 1A.</text>
</comment>
<comment type="miscellaneous">
    <molecule>Isoform 1C</molecule>
    <text evidence="14">C-terminally truncated forms of isoform 1A.</text>
</comment>
<comment type="similarity">
    <text evidence="14">Belongs to the G-protein coupled receptor 3 family.</text>
</comment>
<keyword id="KW-0002">3D-structure</keyword>
<keyword id="KW-0025">Alternative splicing</keyword>
<keyword id="KW-1003">Cell membrane</keyword>
<keyword id="KW-0966">Cell projection</keyword>
<keyword id="KW-1015">Disulfide bond</keyword>
<keyword id="KW-0297">G-protein coupled receptor</keyword>
<keyword id="KW-0325">Glycoprotein</keyword>
<keyword id="KW-0472">Membrane</keyword>
<keyword id="KW-0597">Phosphoprotein</keyword>
<keyword id="KW-0628">Postsynaptic cell membrane</keyword>
<keyword id="KW-0675">Receptor</keyword>
<keyword id="KW-1185">Reference proteome</keyword>
<keyword id="KW-0732">Signal</keyword>
<keyword id="KW-0770">Synapse</keyword>
<keyword id="KW-0807">Transducer</keyword>
<keyword id="KW-0812">Transmembrane</keyword>
<keyword id="KW-1133">Transmembrane helix</keyword>
<accession>P23385</accession>
<proteinExistence type="evidence at protein level"/>
<organism>
    <name type="scientific">Rattus norvegicus</name>
    <name type="common">Rat</name>
    <dbReference type="NCBI Taxonomy" id="10116"/>
    <lineage>
        <taxon>Eukaryota</taxon>
        <taxon>Metazoa</taxon>
        <taxon>Chordata</taxon>
        <taxon>Craniata</taxon>
        <taxon>Vertebrata</taxon>
        <taxon>Euteleostomi</taxon>
        <taxon>Mammalia</taxon>
        <taxon>Eutheria</taxon>
        <taxon>Euarchontoglires</taxon>
        <taxon>Glires</taxon>
        <taxon>Rodentia</taxon>
        <taxon>Myomorpha</taxon>
        <taxon>Muroidea</taxon>
        <taxon>Muridae</taxon>
        <taxon>Murinae</taxon>
        <taxon>Rattus</taxon>
    </lineage>
</organism>
<gene>
    <name type="primary">Grm1</name>
    <name type="synonym">Gprc1a</name>
    <name type="synonym">Mglur1</name>
</gene>